<gene>
    <name evidence="1" type="primary">sat</name>
    <name type="ordered locus">Smar_0337</name>
</gene>
<name>SAT_STAMF</name>
<dbReference type="EC" id="2.7.7.4" evidence="1"/>
<dbReference type="EMBL" id="CP000575">
    <property type="protein sequence ID" value="ABN69449.1"/>
    <property type="molecule type" value="Genomic_DNA"/>
</dbReference>
<dbReference type="RefSeq" id="WP_011838640.1">
    <property type="nucleotide sequence ID" value="NC_009033.1"/>
</dbReference>
<dbReference type="SMR" id="A3DLD9"/>
<dbReference type="STRING" id="399550.Smar_0337"/>
<dbReference type="GeneID" id="4907131"/>
<dbReference type="KEGG" id="smr:Smar_0337"/>
<dbReference type="eggNOG" id="arCOG04191">
    <property type="taxonomic scope" value="Archaea"/>
</dbReference>
<dbReference type="HOGENOM" id="CLU_022950_1_1_2"/>
<dbReference type="OrthoDB" id="6358at2157"/>
<dbReference type="UniPathway" id="UPA00140">
    <property type="reaction ID" value="UER00204"/>
</dbReference>
<dbReference type="Proteomes" id="UP000000254">
    <property type="component" value="Chromosome"/>
</dbReference>
<dbReference type="GO" id="GO:0005524">
    <property type="term" value="F:ATP binding"/>
    <property type="evidence" value="ECO:0007669"/>
    <property type="project" value="UniProtKB-KW"/>
</dbReference>
<dbReference type="GO" id="GO:0004781">
    <property type="term" value="F:sulfate adenylyltransferase (ATP) activity"/>
    <property type="evidence" value="ECO:0007669"/>
    <property type="project" value="UniProtKB-UniRule"/>
</dbReference>
<dbReference type="GO" id="GO:0070814">
    <property type="term" value="P:hydrogen sulfide biosynthetic process"/>
    <property type="evidence" value="ECO:0007669"/>
    <property type="project" value="UniProtKB-UniRule"/>
</dbReference>
<dbReference type="GO" id="GO:0000103">
    <property type="term" value="P:sulfate assimilation"/>
    <property type="evidence" value="ECO:0007669"/>
    <property type="project" value="UniProtKB-UniRule"/>
</dbReference>
<dbReference type="CDD" id="cd00517">
    <property type="entry name" value="ATPS"/>
    <property type="match status" value="1"/>
</dbReference>
<dbReference type="Gene3D" id="3.40.50.620">
    <property type="entry name" value="HUPs"/>
    <property type="match status" value="1"/>
</dbReference>
<dbReference type="Gene3D" id="3.10.400.10">
    <property type="entry name" value="Sulfate adenylyltransferase"/>
    <property type="match status" value="1"/>
</dbReference>
<dbReference type="HAMAP" id="MF_00066">
    <property type="entry name" value="Sulf_adenylyltr"/>
    <property type="match status" value="1"/>
</dbReference>
<dbReference type="InterPro" id="IPR025980">
    <property type="entry name" value="ATP-Sase_PUA-like_dom"/>
</dbReference>
<dbReference type="InterPro" id="IPR015947">
    <property type="entry name" value="PUA-like_sf"/>
</dbReference>
<dbReference type="InterPro" id="IPR014729">
    <property type="entry name" value="Rossmann-like_a/b/a_fold"/>
</dbReference>
<dbReference type="InterPro" id="IPR020792">
    <property type="entry name" value="SO4_adenylyltransferase_pro"/>
</dbReference>
<dbReference type="InterPro" id="IPR024951">
    <property type="entry name" value="Sulfurylase_cat_dom"/>
</dbReference>
<dbReference type="InterPro" id="IPR002650">
    <property type="entry name" value="Sulphate_adenylyltransferase"/>
</dbReference>
<dbReference type="NCBIfam" id="NF003166">
    <property type="entry name" value="PRK04149.1"/>
    <property type="match status" value="1"/>
</dbReference>
<dbReference type="NCBIfam" id="TIGR00339">
    <property type="entry name" value="sopT"/>
    <property type="match status" value="1"/>
</dbReference>
<dbReference type="PANTHER" id="PTHR43509">
    <property type="match status" value="1"/>
</dbReference>
<dbReference type="PANTHER" id="PTHR43509:SF1">
    <property type="entry name" value="SULFATE ADENYLYLTRANSFERASE"/>
    <property type="match status" value="1"/>
</dbReference>
<dbReference type="Pfam" id="PF01747">
    <property type="entry name" value="ATP-sulfurylase"/>
    <property type="match status" value="1"/>
</dbReference>
<dbReference type="Pfam" id="PF14306">
    <property type="entry name" value="PUA_2"/>
    <property type="match status" value="1"/>
</dbReference>
<dbReference type="SUPFAM" id="SSF52374">
    <property type="entry name" value="Nucleotidylyl transferase"/>
    <property type="match status" value="1"/>
</dbReference>
<dbReference type="SUPFAM" id="SSF88697">
    <property type="entry name" value="PUA domain-like"/>
    <property type="match status" value="1"/>
</dbReference>
<sequence length="382" mass="44356">MIPRPHGGKLVNRIVSSKRRTALLKETHELPSIEISYERLIDLLDIANGAFSPLEGFMVQEDYLHVLYDMRLSNDLPWTIPVILDVDPEEISNVKEGDDIALKYKDEIYAIMRVEEIYGWDKKEYARQVYKTTDPNHPGVAKTYQRKELLLGGTIDLLNQPHHPLEHRILWPIETRVLFREKKWRTIVAFQTRNVPHRGHEYVQKAALTFTDGLFIHPLIGWKKPGDYRDEVIFAAYEALIKHYYPDNVVVLAGLMMNMNYAGPREAVHHAIVRKNFGATHFIVGRDHAGVGDYYKPYEAWEIFDEFPDLGITPLFIREAFYCKKCGGMVNEKICPHGEEYRIRISGTKLREIIKKGITPPEYMMRPEVAKVILSFKDPFVH</sequence>
<evidence type="ECO:0000255" key="1">
    <source>
        <dbReference type="HAMAP-Rule" id="MF_00066"/>
    </source>
</evidence>
<organism>
    <name type="scientific">Staphylothermus marinus (strain ATCC 43588 / DSM 3639 / JCM 9404 / F1)</name>
    <dbReference type="NCBI Taxonomy" id="399550"/>
    <lineage>
        <taxon>Archaea</taxon>
        <taxon>Thermoproteota</taxon>
        <taxon>Thermoprotei</taxon>
        <taxon>Desulfurococcales</taxon>
        <taxon>Desulfurococcaceae</taxon>
        <taxon>Staphylothermus</taxon>
    </lineage>
</organism>
<keyword id="KW-0067">ATP-binding</keyword>
<keyword id="KW-0547">Nucleotide-binding</keyword>
<keyword id="KW-0548">Nucleotidyltransferase</keyword>
<keyword id="KW-1185">Reference proteome</keyword>
<keyword id="KW-0808">Transferase</keyword>
<feature type="chain" id="PRO_1000009044" description="Sulfate adenylyltransferase">
    <location>
        <begin position="1"/>
        <end position="382"/>
    </location>
</feature>
<proteinExistence type="inferred from homology"/>
<reference key="1">
    <citation type="journal article" date="2009" name="BMC Genomics">
        <title>The complete genome sequence of Staphylothermus marinus reveals differences in sulfur metabolism among heterotrophic Crenarchaeota.</title>
        <authorList>
            <person name="Anderson I.J."/>
            <person name="Dharmarajan L."/>
            <person name="Rodriguez J."/>
            <person name="Hooper S."/>
            <person name="Porat I."/>
            <person name="Ulrich L.E."/>
            <person name="Elkins J.G."/>
            <person name="Mavromatis K."/>
            <person name="Sun H."/>
            <person name="Land M."/>
            <person name="Lapidus A."/>
            <person name="Lucas S."/>
            <person name="Barry K."/>
            <person name="Huber H."/>
            <person name="Zhulin I.B."/>
            <person name="Whitman W.B."/>
            <person name="Mukhopadhyay B."/>
            <person name="Woese C."/>
            <person name="Bristow J."/>
            <person name="Kyrpides N."/>
        </authorList>
    </citation>
    <scope>NUCLEOTIDE SEQUENCE [LARGE SCALE GENOMIC DNA]</scope>
    <source>
        <strain>ATCC 43588 / DSM 3639 / JCM 9404 / F1</strain>
    </source>
</reference>
<reference key="2">
    <citation type="journal article" date="2009" name="Stand. Genomic Sci.">
        <title>Complete genome sequence of Staphylothermus marinus Stetter and Fiala 1986 type strain F1.</title>
        <authorList>
            <person name="Anderson I.J."/>
            <person name="Sun H."/>
            <person name="Lapidus A."/>
            <person name="Copeland A."/>
            <person name="Glavina Del Rio T."/>
            <person name="Tice H."/>
            <person name="Dalin E."/>
            <person name="Lucas S."/>
            <person name="Barry K."/>
            <person name="Land M."/>
            <person name="Richardson P."/>
            <person name="Huber H."/>
            <person name="Kyrpides N.C."/>
        </authorList>
    </citation>
    <scope>NUCLEOTIDE SEQUENCE [LARGE SCALE GENOMIC DNA]</scope>
    <source>
        <strain>ATCC 43588 / DSM 3639 / JCM 9404 / F1</strain>
    </source>
</reference>
<protein>
    <recommendedName>
        <fullName evidence="1">Sulfate adenylyltransferase</fullName>
        <ecNumber evidence="1">2.7.7.4</ecNumber>
    </recommendedName>
    <alternativeName>
        <fullName evidence="1">ATP-sulfurylase</fullName>
    </alternativeName>
    <alternativeName>
        <fullName evidence="1">Sulfate adenylate transferase</fullName>
        <shortName evidence="1">SAT</shortName>
    </alternativeName>
</protein>
<accession>A3DLD9</accession>
<comment type="catalytic activity">
    <reaction evidence="1">
        <text>sulfate + ATP + H(+) = adenosine 5'-phosphosulfate + diphosphate</text>
        <dbReference type="Rhea" id="RHEA:18133"/>
        <dbReference type="ChEBI" id="CHEBI:15378"/>
        <dbReference type="ChEBI" id="CHEBI:16189"/>
        <dbReference type="ChEBI" id="CHEBI:30616"/>
        <dbReference type="ChEBI" id="CHEBI:33019"/>
        <dbReference type="ChEBI" id="CHEBI:58243"/>
        <dbReference type="EC" id="2.7.7.4"/>
    </reaction>
</comment>
<comment type="pathway">
    <text evidence="1">Sulfur metabolism; hydrogen sulfide biosynthesis; sulfite from sulfate: step 1/3.</text>
</comment>
<comment type="similarity">
    <text evidence="1">Belongs to the sulfate adenylyltransferase family.</text>
</comment>